<organism>
    <name type="scientific">Tachypleus tridentatus</name>
    <name type="common">Japanese horseshoe crab</name>
    <dbReference type="NCBI Taxonomy" id="6853"/>
    <lineage>
        <taxon>Eukaryota</taxon>
        <taxon>Metazoa</taxon>
        <taxon>Ecdysozoa</taxon>
        <taxon>Arthropoda</taxon>
        <taxon>Chelicerata</taxon>
        <taxon>Merostomata</taxon>
        <taxon>Xiphosura</taxon>
        <taxon>Limulidae</taxon>
        <taxon>Tachypleus</taxon>
    </lineage>
</organism>
<accession>P21902</accession>
<protein>
    <recommendedName>
        <fullName>Proclotting enzyme</fullName>
        <ecNumber evidence="6 11 15 16 17">3.4.21.86</ecNumber>
    </recommendedName>
    <component>
        <recommendedName>
            <fullName evidence="12">Proclotting enzyme light chain</fullName>
        </recommendedName>
    </component>
    <component>
        <recommendedName>
            <fullName evidence="12">Proclotting enzyme heavy chain</fullName>
        </recommendedName>
    </component>
</protein>
<feature type="signal peptide" evidence="2">
    <location>
        <begin position="1"/>
        <end position="21"/>
    </location>
</feature>
<feature type="propeptide" id="PRO_0000028427" evidence="13">
    <location>
        <begin position="22"/>
        <end position="27"/>
    </location>
</feature>
<feature type="chain" id="PRO_0000028428" description="Proclotting enzyme light chain" evidence="13">
    <location>
        <begin position="30"/>
        <end position="127"/>
    </location>
</feature>
<feature type="chain" id="PRO_0000028429" description="Proclotting enzyme heavy chain" evidence="13">
    <location>
        <begin position="128"/>
        <end position="375"/>
    </location>
</feature>
<feature type="domain" description="Clip" evidence="4">
    <location>
        <begin position="39"/>
        <end position="84"/>
    </location>
</feature>
<feature type="domain" description="Peptidase S1" evidence="3">
    <location>
        <begin position="128"/>
        <end position="375"/>
    </location>
</feature>
<feature type="region of interest" description="Disordered" evidence="5">
    <location>
        <begin position="90"/>
        <end position="113"/>
    </location>
</feature>
<feature type="active site" description="Charge relay system" evidence="3">
    <location>
        <position position="172"/>
    </location>
</feature>
<feature type="active site" description="Charge relay system" evidence="3">
    <location>
        <position position="228"/>
    </location>
</feature>
<feature type="active site" description="Charge relay system" evidence="3">
    <location>
        <position position="326"/>
    </location>
</feature>
<feature type="binding site" evidence="1">
    <location>
        <position position="194"/>
    </location>
    <ligand>
        <name>Ca(2+)</name>
        <dbReference type="ChEBI" id="CHEBI:29108"/>
    </ligand>
</feature>
<feature type="binding site" evidence="1">
    <location>
        <position position="196"/>
    </location>
    <ligand>
        <name>Ca(2+)</name>
        <dbReference type="ChEBI" id="CHEBI:29108"/>
    </ligand>
</feature>
<feature type="binding site" evidence="1">
    <location>
        <position position="199"/>
    </location>
    <ligand>
        <name>Ca(2+)</name>
        <dbReference type="ChEBI" id="CHEBI:29108"/>
    </ligand>
</feature>
<feature type="binding site" evidence="1">
    <location>
        <position position="202"/>
    </location>
    <ligand>
        <name>Ca(2+)</name>
        <dbReference type="ChEBI" id="CHEBI:29108"/>
    </ligand>
</feature>
<feature type="site" description="Cleavage" evidence="6">
    <location>
        <begin position="127"/>
        <end position="128"/>
    </location>
</feature>
<feature type="modified residue" description="Pyrrolidone carboxylic acid" evidence="6">
    <location>
        <position position="30"/>
    </location>
</feature>
<feature type="glycosylation site" description="N-linked (GlcNAc...) asparagine" evidence="6">
    <location>
        <position position="122"/>
    </location>
</feature>
<feature type="glycosylation site" description="N-linked (GlcNAc...) asparagine" evidence="6">
    <location>
        <position position="235"/>
    </location>
</feature>
<feature type="glycosylation site" description="N-linked (GlcNAc...) asparagine" evidence="6">
    <location>
        <position position="304"/>
    </location>
</feature>
<feature type="disulfide bond" evidence="4 6">
    <location>
        <begin position="40"/>
        <end position="83"/>
    </location>
</feature>
<feature type="disulfide bond" evidence="4 6">
    <location>
        <begin position="50"/>
        <end position="73"/>
    </location>
</feature>
<feature type="disulfide bond" evidence="4 6">
    <location>
        <begin position="56"/>
        <end position="84"/>
    </location>
</feature>
<feature type="disulfide bond" description="Interchain (between light and heavy chains)" evidence="6 7">
    <location>
        <begin position="118"/>
        <end position="248"/>
    </location>
</feature>
<feature type="disulfide bond" evidence="3 6">
    <location>
        <begin position="157"/>
        <end position="173"/>
    </location>
</feature>
<feature type="disulfide bond" evidence="3 6">
    <location>
        <begin position="295"/>
        <end position="311"/>
    </location>
</feature>
<feature type="disulfide bond" evidence="3 6">
    <location>
        <begin position="322"/>
        <end position="351"/>
    </location>
</feature>
<dbReference type="EC" id="3.4.21.86" evidence="6 11 15 16 17"/>
<dbReference type="EMBL" id="M58366">
    <property type="protein sequence ID" value="AAA30094.1"/>
    <property type="molecule type" value="mRNA"/>
</dbReference>
<dbReference type="PIR" id="A23689">
    <property type="entry name" value="A23689"/>
</dbReference>
<dbReference type="SMR" id="P21902"/>
<dbReference type="MEROPS" id="S01.221"/>
<dbReference type="iPTMnet" id="P21902"/>
<dbReference type="KEGG" id="ag:AAA30094"/>
<dbReference type="GO" id="GO:0005576">
    <property type="term" value="C:extracellular region"/>
    <property type="evidence" value="ECO:0007669"/>
    <property type="project" value="UniProtKB-SubCell"/>
</dbReference>
<dbReference type="GO" id="GO:0030133">
    <property type="term" value="C:transport vesicle"/>
    <property type="evidence" value="ECO:0007669"/>
    <property type="project" value="UniProtKB-SubCell"/>
</dbReference>
<dbReference type="GO" id="GO:0046872">
    <property type="term" value="F:metal ion binding"/>
    <property type="evidence" value="ECO:0007669"/>
    <property type="project" value="UniProtKB-KW"/>
</dbReference>
<dbReference type="GO" id="GO:0004252">
    <property type="term" value="F:serine-type endopeptidase activity"/>
    <property type="evidence" value="ECO:0000314"/>
    <property type="project" value="UniProtKB"/>
</dbReference>
<dbReference type="GO" id="GO:0008236">
    <property type="term" value="F:serine-type peptidase activity"/>
    <property type="evidence" value="ECO:0000314"/>
    <property type="project" value="UniProtKB"/>
</dbReference>
<dbReference type="GO" id="GO:0042381">
    <property type="term" value="P:hemolymph coagulation"/>
    <property type="evidence" value="ECO:0000314"/>
    <property type="project" value="UniProtKB"/>
</dbReference>
<dbReference type="GO" id="GO:0016485">
    <property type="term" value="P:protein processing"/>
    <property type="evidence" value="ECO:0000314"/>
    <property type="project" value="UniProtKB"/>
</dbReference>
<dbReference type="CDD" id="cd00190">
    <property type="entry name" value="Tryp_SPc"/>
    <property type="match status" value="1"/>
</dbReference>
<dbReference type="FunFam" id="2.40.10.10:FF:000015">
    <property type="entry name" value="Atrial natriuretic peptide-converting enzyme"/>
    <property type="match status" value="1"/>
</dbReference>
<dbReference type="Gene3D" id="3.30.1640.30">
    <property type="match status" value="1"/>
</dbReference>
<dbReference type="Gene3D" id="2.40.10.10">
    <property type="entry name" value="Trypsin-like serine proteases"/>
    <property type="match status" value="1"/>
</dbReference>
<dbReference type="InterPro" id="IPR022700">
    <property type="entry name" value="CLIP"/>
</dbReference>
<dbReference type="InterPro" id="IPR038565">
    <property type="entry name" value="CLIP_sf"/>
</dbReference>
<dbReference type="InterPro" id="IPR009003">
    <property type="entry name" value="Peptidase_S1_PA"/>
</dbReference>
<dbReference type="InterPro" id="IPR043504">
    <property type="entry name" value="Peptidase_S1_PA_chymotrypsin"/>
</dbReference>
<dbReference type="InterPro" id="IPR001314">
    <property type="entry name" value="Peptidase_S1A"/>
</dbReference>
<dbReference type="InterPro" id="IPR001254">
    <property type="entry name" value="Trypsin_dom"/>
</dbReference>
<dbReference type="InterPro" id="IPR018114">
    <property type="entry name" value="TRYPSIN_HIS"/>
</dbReference>
<dbReference type="InterPro" id="IPR033116">
    <property type="entry name" value="TRYPSIN_SER"/>
</dbReference>
<dbReference type="PANTHER" id="PTHR24252">
    <property type="entry name" value="ACROSIN-RELATED"/>
    <property type="match status" value="1"/>
</dbReference>
<dbReference type="PANTHER" id="PTHR24252:SF7">
    <property type="entry name" value="HYALIN"/>
    <property type="match status" value="1"/>
</dbReference>
<dbReference type="Pfam" id="PF00089">
    <property type="entry name" value="Trypsin"/>
    <property type="match status" value="1"/>
</dbReference>
<dbReference type="PRINTS" id="PR00722">
    <property type="entry name" value="CHYMOTRYPSIN"/>
</dbReference>
<dbReference type="SMART" id="SM00680">
    <property type="entry name" value="CLIP"/>
    <property type="match status" value="1"/>
</dbReference>
<dbReference type="SMART" id="SM00020">
    <property type="entry name" value="Tryp_SPc"/>
    <property type="match status" value="1"/>
</dbReference>
<dbReference type="SUPFAM" id="SSF50494">
    <property type="entry name" value="Trypsin-like serine proteases"/>
    <property type="match status" value="1"/>
</dbReference>
<dbReference type="PROSITE" id="PS51888">
    <property type="entry name" value="CLIP"/>
    <property type="match status" value="1"/>
</dbReference>
<dbReference type="PROSITE" id="PS50240">
    <property type="entry name" value="TRYPSIN_DOM"/>
    <property type="match status" value="1"/>
</dbReference>
<dbReference type="PROSITE" id="PS00134">
    <property type="entry name" value="TRYPSIN_HIS"/>
    <property type="match status" value="1"/>
</dbReference>
<dbReference type="PROSITE" id="PS00135">
    <property type="entry name" value="TRYPSIN_SER"/>
    <property type="match status" value="1"/>
</dbReference>
<comment type="function">
    <text evidence="6 9 11">This enzyme is closely associated with an endotoxin-sensitive hemolymph coagulation system in limulus (PubMed:2266134). Its active form catalyzes the conversion of coagulogen to insoluble coagulin gel (PubMed:7822328, PubMed:977558).</text>
</comment>
<comment type="catalytic activity">
    <reaction evidence="11 14 15 16 17">
        <text>Selective cleavage of 18-Arg-|- and 47-Arg-|- bonds in coagulogen to form coagulin and fragments.</text>
        <dbReference type="EC" id="3.4.21.86"/>
    </reaction>
</comment>
<comment type="activity regulation">
    <text evidence="8 10">Inhibited by intracellular coagulation inhibitor 2/LICI-2 and to a lesser extent by intracellular coagulation inhibitor 3/LICI-3.</text>
</comment>
<comment type="subunit">
    <text evidence="6 8">In the active form, heterodimer of a light chain and a heavy chain; disulfide-linked (PubMed:2266134, PubMed:7822280). Forms a covalent heterodimer with intracellular coagulation inhibitor 2/LICI-2 (PubMed:7822280).</text>
</comment>
<comment type="subcellular location">
    <subcellularLocation>
        <location evidence="6">Cytoplasmic vesicle</location>
        <location evidence="6">Secretory vesicle</location>
    </subcellularLocation>
    <subcellularLocation>
        <location evidence="6">Secreted</location>
    </subcellularLocation>
    <text evidence="12">Secreted in hemolymph probably upon bacterial lipopolysaccharide (LPS) stimulation.</text>
</comment>
<comment type="tissue specificity">
    <text evidence="6 8">Expressed in hemocytes (at protein level).</text>
</comment>
<comment type="domain">
    <text evidence="4 6">The clip domain consists of 35-55 residues which are 'knitted' together usually by 3 conserved disulfide bonds forming a clip-like compact structure.</text>
</comment>
<comment type="PTM">
    <text evidence="6 7 9">Proteolytically cleaved into its mature active form by serine protease factor B (PubMed:2266134, PubMed:4030738). Cleavage produces a 25 kDa light chain containing the CLIP domain and a catalytic 31 kDa heavy chain which remain covalently associated through an interchain disulfide bond (PubMed:2266134, PubMed:4030738). Proteolytically cleaved by clotting factor G subunit beta (PubMed:7822328).</text>
</comment>
<comment type="PTM">
    <text evidence="6 7">Contains six O-linked carbohydrate chains in the N-terminal light chain.</text>
</comment>
<comment type="similarity">
    <text evidence="4">Belongs to the peptidase S1 family. CLIP subfamily.</text>
</comment>
<reference key="1">
    <citation type="journal article" date="1990" name="J. Biol. Chem.">
        <title>Proclotting enzyme from horseshoe crab hemocytes. cDNA cloning, disulfide locations, and subcellular localization.</title>
        <authorList>
            <person name="Muta T."/>
            <person name="Hashimoto R."/>
            <person name="Miyata T."/>
            <person name="Nishimura H."/>
            <person name="Toh Y."/>
            <person name="Iwanaga S."/>
        </authorList>
    </citation>
    <scope>NUCLEOTIDE SEQUENCE [MRNA]</scope>
    <scope>PARTIAL PROTEIN SEQUENCE</scope>
    <scope>FUNCTION</scope>
    <scope>CATALYTIC ACTIVITY</scope>
    <scope>SUBUNIT</scope>
    <scope>SUBCELLULAR LOCATION</scope>
    <scope>TISSUE SPECIFICITY</scope>
    <scope>DOMAIN</scope>
    <scope>PROTEOLYTIC CLEAVAGE</scope>
    <scope>DISULFIDE BONDS</scope>
    <scope>GLYCOSYLATION AT ASN-122; ASN-235 AND ASN-304</scope>
    <scope>PYROGLUTAMATE FORMATION AT GLN-30</scope>
    <source>
        <tissue>Hemocyte</tissue>
    </source>
</reference>
<reference key="2">
    <citation type="journal article" date="1976" name="J. Biochem.">
        <title>A clottable protein (coagulogen) of horseshoe crab hemocytes. Structural change of its polypeptide chain during gel formation.</title>
        <authorList>
            <person name="Nakamura S."/>
            <person name="Takagi T."/>
            <person name="Iwanaga S."/>
            <person name="Niwa M."/>
            <person name="Takahashi K."/>
        </authorList>
    </citation>
    <scope>FUNCTION</scope>
    <scope>CATALYTIC ACTIVITY</scope>
</reference>
<reference key="3">
    <citation type="journal article" date="1985" name="J. Biochem.">
        <title>Intracellular proclotting enzyme in limulus (Tachypleus tridentatus) hemocytes: its purification and properties.</title>
        <authorList>
            <person name="Nakamura T."/>
            <person name="Morita T."/>
            <person name="Iwanaga S."/>
        </authorList>
    </citation>
    <scope>CATALYTIC ACTIVITY</scope>
    <scope>SUBUNIT</scope>
    <scope>PROTEOLYTIC CLEAVAGE</scope>
    <scope>DISULFIDE BOND</scope>
    <scope>GLYCOSYLATION</scope>
</reference>
<reference key="4">
    <citation type="journal article" date="1995" name="J. Biol. Chem.">
        <title>A limulus intracellular coagulation inhibitor type 2. Purification, characterization, cDNA cloning, and tissue localization.</title>
        <authorList>
            <person name="Miura Y."/>
            <person name="Kawabata S."/>
            <person name="Wakamiya Y."/>
            <person name="Nakamura T."/>
            <person name="Iwanaga S."/>
        </authorList>
    </citation>
    <scope>CATALYTIC ACTIVITY</scope>
    <scope>ACTIVITY REGULATION</scope>
    <scope>SUBUNIT</scope>
    <scope>TISSUE SPECIFICITY</scope>
</reference>
<reference key="5">
    <citation type="journal article" date="1995" name="J. Biol. Chem.">
        <title>Purified horseshoe crab factor G. Reconstitution and characterization of the (1--&gt;3)-beta-D-glucan-sensitive serine protease cascade.</title>
        <authorList>
            <person name="Muta T."/>
            <person name="Seki N."/>
            <person name="Takaki Y."/>
            <person name="Hashimoto R."/>
            <person name="Oda T."/>
            <person name="Iwanaga A."/>
            <person name="Tokunaga F."/>
            <person name="Iwanaga S."/>
        </authorList>
    </citation>
    <scope>FUNCTION</scope>
    <scope>CATALYTIC ACTIVITY</scope>
    <scope>PROTEOLYTIC CLEAVAGE</scope>
</reference>
<reference key="6">
    <citation type="journal article" date="1996" name="J. Biol. Chem.">
        <title>Limulus intracellular coagulation inhibitor type 3. Purification, characterization, cDNA cloning, and tissue localization.</title>
        <authorList>
            <person name="Agarwala K.L."/>
            <person name="Kawabata S."/>
            <person name="Miura Y."/>
            <person name="Kuroki Y."/>
            <person name="Iwanaga S."/>
        </authorList>
    </citation>
    <scope>CATALYTIC ACTIVITY</scope>
    <scope>ACTIVITY REGULATION</scope>
</reference>
<proteinExistence type="evidence at protein level"/>
<evidence type="ECO:0000250" key="1">
    <source>
        <dbReference type="UniProtKB" id="O97366"/>
    </source>
</evidence>
<evidence type="ECO:0000255" key="2"/>
<evidence type="ECO:0000255" key="3">
    <source>
        <dbReference type="PROSITE-ProRule" id="PRU00274"/>
    </source>
</evidence>
<evidence type="ECO:0000255" key="4">
    <source>
        <dbReference type="PROSITE-ProRule" id="PRU01236"/>
    </source>
</evidence>
<evidence type="ECO:0000256" key="5">
    <source>
        <dbReference type="SAM" id="MobiDB-lite"/>
    </source>
</evidence>
<evidence type="ECO:0000269" key="6">
    <source>
    </source>
</evidence>
<evidence type="ECO:0000269" key="7">
    <source>
    </source>
</evidence>
<evidence type="ECO:0000269" key="8">
    <source>
    </source>
</evidence>
<evidence type="ECO:0000269" key="9">
    <source>
    </source>
</evidence>
<evidence type="ECO:0000269" key="10">
    <source>
    </source>
</evidence>
<evidence type="ECO:0000269" key="11">
    <source>
    </source>
</evidence>
<evidence type="ECO:0000303" key="12">
    <source>
    </source>
</evidence>
<evidence type="ECO:0000305" key="13">
    <source>
    </source>
</evidence>
<evidence type="ECO:0000305" key="14">
    <source>
    </source>
</evidence>
<evidence type="ECO:0000305" key="15">
    <source>
    </source>
</evidence>
<evidence type="ECO:0000305" key="16">
    <source>
    </source>
</evidence>
<evidence type="ECO:0000305" key="17">
    <source>
    </source>
</evidence>
<sequence length="375" mass="41592">MLVNNVFSLLCFPLLMSVVRCSTLSRQRRQFVFPDEEELCSNRFTEEGTCKNVLDCRILLQKNDYNLLKESICGFEGITPKVCCPKSSHVISSTQAPPETTTTERPPKQIPPNLPEVCGIHNTTTTRIIGGREAPIGAWPWMTAVYIKQGGIRSVQCGGALVTNRHVITASHCVVNSAGTDVMPADVFSVRLGEHNLYSTDDDSNPIDFAVTSVKHHEHFVLATYLNDIAILTLNDTVTFTDRIRPICLPYRKLRYDDLAMRKPFITGWGTTAFNGPSSAVLREVQLPIWEHEACRQAYEKDLNITNVYMCAGFADGGKDACQGDSGGPMMLPVKTGEFYLIGIVSFGKKCALPGFPGVYTKVTEFLDWIAEHMV</sequence>
<name>PCE_TACTR</name>
<keyword id="KW-0106">Calcium</keyword>
<keyword id="KW-0165">Cleavage on pair of basic residues</keyword>
<keyword id="KW-0968">Cytoplasmic vesicle</keyword>
<keyword id="KW-0903">Direct protein sequencing</keyword>
<keyword id="KW-1015">Disulfide bond</keyword>
<keyword id="KW-0325">Glycoprotein</keyword>
<keyword id="KW-0353">Hemolymph clotting</keyword>
<keyword id="KW-0378">Hydrolase</keyword>
<keyword id="KW-0479">Metal-binding</keyword>
<keyword id="KW-0645">Protease</keyword>
<keyword id="KW-0873">Pyrrolidone carboxylic acid</keyword>
<keyword id="KW-0964">Secreted</keyword>
<keyword id="KW-0720">Serine protease</keyword>
<keyword id="KW-0732">Signal</keyword>
<keyword id="KW-0865">Zymogen</keyword>